<protein>
    <recommendedName>
        <fullName evidence="1">Glutamyl-Q tRNA(Asp) synthetase</fullName>
        <shortName evidence="1">Glu-Q-RSs</shortName>
        <ecNumber evidence="1">6.1.1.-</ecNumber>
    </recommendedName>
</protein>
<sequence length="300" mass="31585">MAEVVTGRFAPSPTGALHAGSMVAALASWLDVRAQGGVWLVRMEDVDTPRCVPGAAEQILSQLAACGLNSDRPPMWQSSRGAAYGAALAQLVEAGLAYPCACTRKQIEQDALAAGHLHLRQAERVYPGTCRPERGGLAGRAARAWRLHTARAGGSAAVSWSDRRLGRRSQGVEAAVGDFVLRRADGLWAYQLAVVVDDAAQGITDVVRGEDLADNTARQILLQRALGLPMPRYLHTPLVLAADGQKLSKQNGAVPVAMDDPAGVLRAAAAVLGLTLDAGRPVGETLAQAVALWRAGWLAR</sequence>
<comment type="function">
    <text evidence="1">Catalyzes the tRNA-independent activation of glutamate in presence of ATP and the subsequent transfer of glutamate onto a tRNA(Asp). Glutamate is transferred on the 2-amino-5-(4,5-dihydroxy-2-cyclopenten-1-yl) moiety of the queuosine in the wobble position of the QUC anticodon.</text>
</comment>
<comment type="cofactor">
    <cofactor evidence="1">
        <name>Zn(2+)</name>
        <dbReference type="ChEBI" id="CHEBI:29105"/>
    </cofactor>
    <text evidence="1">Binds 1 zinc ion per subunit.</text>
</comment>
<comment type="similarity">
    <text evidence="1">Belongs to the class-I aminoacyl-tRNA synthetase family. GluQ subfamily.</text>
</comment>
<evidence type="ECO:0000255" key="1">
    <source>
        <dbReference type="HAMAP-Rule" id="MF_01428"/>
    </source>
</evidence>
<proteinExistence type="inferred from homology"/>
<feature type="chain" id="PRO_1000145742" description="Glutamyl-Q tRNA(Asp) synthetase">
    <location>
        <begin position="1"/>
        <end position="300"/>
    </location>
</feature>
<feature type="short sequence motif" description="'HIGH' region">
    <location>
        <begin position="11"/>
        <end position="21"/>
    </location>
</feature>
<feature type="short sequence motif" description="'KMSKS' region">
    <location>
        <begin position="246"/>
        <end position="250"/>
    </location>
</feature>
<feature type="binding site" evidence="1">
    <location>
        <begin position="8"/>
        <end position="12"/>
    </location>
    <ligand>
        <name>L-glutamate</name>
        <dbReference type="ChEBI" id="CHEBI:29985"/>
    </ligand>
</feature>
<feature type="binding site" evidence="1">
    <location>
        <position position="44"/>
    </location>
    <ligand>
        <name>L-glutamate</name>
        <dbReference type="ChEBI" id="CHEBI:29985"/>
    </ligand>
</feature>
<feature type="binding site" evidence="1">
    <location>
        <position position="100"/>
    </location>
    <ligand>
        <name>Zn(2+)</name>
        <dbReference type="ChEBI" id="CHEBI:29105"/>
    </ligand>
</feature>
<feature type="binding site" evidence="1">
    <location>
        <position position="102"/>
    </location>
    <ligand>
        <name>Zn(2+)</name>
        <dbReference type="ChEBI" id="CHEBI:29105"/>
    </ligand>
</feature>
<feature type="binding site" evidence="1">
    <location>
        <position position="126"/>
    </location>
    <ligand>
        <name>Zn(2+)</name>
        <dbReference type="ChEBI" id="CHEBI:29105"/>
    </ligand>
</feature>
<feature type="binding site" evidence="1">
    <location>
        <position position="130"/>
    </location>
    <ligand>
        <name>Zn(2+)</name>
        <dbReference type="ChEBI" id="CHEBI:29105"/>
    </ligand>
</feature>
<feature type="binding site" evidence="1">
    <location>
        <position position="190"/>
    </location>
    <ligand>
        <name>L-glutamate</name>
        <dbReference type="ChEBI" id="CHEBI:29985"/>
    </ligand>
</feature>
<feature type="binding site" evidence="1">
    <location>
        <position position="208"/>
    </location>
    <ligand>
        <name>L-glutamate</name>
        <dbReference type="ChEBI" id="CHEBI:29985"/>
    </ligand>
</feature>
<feature type="binding site" evidence="1">
    <location>
        <position position="249"/>
    </location>
    <ligand>
        <name>ATP</name>
        <dbReference type="ChEBI" id="CHEBI:30616"/>
    </ligand>
</feature>
<keyword id="KW-0030">Aminoacyl-tRNA synthetase</keyword>
<keyword id="KW-0067">ATP-binding</keyword>
<keyword id="KW-0436">Ligase</keyword>
<keyword id="KW-0479">Metal-binding</keyword>
<keyword id="KW-0547">Nucleotide-binding</keyword>
<keyword id="KW-1185">Reference proteome</keyword>
<keyword id="KW-0862">Zinc</keyword>
<accession>B1Y0I4</accession>
<name>GLUQ_LEPCP</name>
<gene>
    <name evidence="1" type="primary">gluQ</name>
    <name type="ordered locus">Lcho_0690</name>
</gene>
<reference key="1">
    <citation type="submission" date="2008-03" db="EMBL/GenBank/DDBJ databases">
        <title>Complete sequence of Leptothrix cholodnii SP-6.</title>
        <authorList>
            <consortium name="US DOE Joint Genome Institute"/>
            <person name="Copeland A."/>
            <person name="Lucas S."/>
            <person name="Lapidus A."/>
            <person name="Glavina del Rio T."/>
            <person name="Dalin E."/>
            <person name="Tice H."/>
            <person name="Bruce D."/>
            <person name="Goodwin L."/>
            <person name="Pitluck S."/>
            <person name="Chertkov O."/>
            <person name="Brettin T."/>
            <person name="Detter J.C."/>
            <person name="Han C."/>
            <person name="Kuske C.R."/>
            <person name="Schmutz J."/>
            <person name="Larimer F."/>
            <person name="Land M."/>
            <person name="Hauser L."/>
            <person name="Kyrpides N."/>
            <person name="Lykidis A."/>
            <person name="Emerson D."/>
            <person name="Richardson P."/>
        </authorList>
    </citation>
    <scope>NUCLEOTIDE SEQUENCE [LARGE SCALE GENOMIC DNA]</scope>
    <source>
        <strain>ATCC 51168 / LMG 8142 / SP-6</strain>
    </source>
</reference>
<organism>
    <name type="scientific">Leptothrix cholodnii (strain ATCC 51168 / LMG 8142 / SP-6)</name>
    <name type="common">Leptothrix discophora (strain SP-6)</name>
    <dbReference type="NCBI Taxonomy" id="395495"/>
    <lineage>
        <taxon>Bacteria</taxon>
        <taxon>Pseudomonadati</taxon>
        <taxon>Pseudomonadota</taxon>
        <taxon>Betaproteobacteria</taxon>
        <taxon>Burkholderiales</taxon>
        <taxon>Sphaerotilaceae</taxon>
        <taxon>Leptothrix</taxon>
    </lineage>
</organism>
<dbReference type="EC" id="6.1.1.-" evidence="1"/>
<dbReference type="EMBL" id="CP001013">
    <property type="protein sequence ID" value="ACB32965.1"/>
    <property type="molecule type" value="Genomic_DNA"/>
</dbReference>
<dbReference type="RefSeq" id="WP_012345727.1">
    <property type="nucleotide sequence ID" value="NC_010524.1"/>
</dbReference>
<dbReference type="SMR" id="B1Y0I4"/>
<dbReference type="STRING" id="395495.Lcho_0690"/>
<dbReference type="KEGG" id="lch:Lcho_0690"/>
<dbReference type="eggNOG" id="COG0008">
    <property type="taxonomic scope" value="Bacteria"/>
</dbReference>
<dbReference type="HOGENOM" id="CLU_015768_0_1_4"/>
<dbReference type="OrthoDB" id="9807503at2"/>
<dbReference type="Proteomes" id="UP000001693">
    <property type="component" value="Chromosome"/>
</dbReference>
<dbReference type="GO" id="GO:0005829">
    <property type="term" value="C:cytosol"/>
    <property type="evidence" value="ECO:0007669"/>
    <property type="project" value="TreeGrafter"/>
</dbReference>
<dbReference type="GO" id="GO:0005524">
    <property type="term" value="F:ATP binding"/>
    <property type="evidence" value="ECO:0007669"/>
    <property type="project" value="UniProtKB-KW"/>
</dbReference>
<dbReference type="GO" id="GO:0004818">
    <property type="term" value="F:glutamate-tRNA ligase activity"/>
    <property type="evidence" value="ECO:0007669"/>
    <property type="project" value="TreeGrafter"/>
</dbReference>
<dbReference type="GO" id="GO:0008270">
    <property type="term" value="F:zinc ion binding"/>
    <property type="evidence" value="ECO:0007669"/>
    <property type="project" value="UniProtKB-UniRule"/>
</dbReference>
<dbReference type="GO" id="GO:0006424">
    <property type="term" value="P:glutamyl-tRNA aminoacylation"/>
    <property type="evidence" value="ECO:0007669"/>
    <property type="project" value="InterPro"/>
</dbReference>
<dbReference type="GO" id="GO:0006400">
    <property type="term" value="P:tRNA modification"/>
    <property type="evidence" value="ECO:0007669"/>
    <property type="project" value="InterPro"/>
</dbReference>
<dbReference type="Gene3D" id="3.40.50.620">
    <property type="entry name" value="HUPs"/>
    <property type="match status" value="1"/>
</dbReference>
<dbReference type="HAMAP" id="MF_01428">
    <property type="entry name" value="Glu_Q_tRNA_synth"/>
    <property type="match status" value="1"/>
</dbReference>
<dbReference type="InterPro" id="IPR022380">
    <property type="entry name" value="Glu-Q_tRNA(Asp)_Synthase"/>
</dbReference>
<dbReference type="InterPro" id="IPR000924">
    <property type="entry name" value="Glu/Gln-tRNA-synth"/>
</dbReference>
<dbReference type="InterPro" id="IPR020058">
    <property type="entry name" value="Glu/Gln-tRNA-synth_Ib_cat-dom"/>
</dbReference>
<dbReference type="InterPro" id="IPR049940">
    <property type="entry name" value="GluQ/Sye"/>
</dbReference>
<dbReference type="InterPro" id="IPR014729">
    <property type="entry name" value="Rossmann-like_a/b/a_fold"/>
</dbReference>
<dbReference type="NCBIfam" id="NF004313">
    <property type="entry name" value="PRK05710.1-2"/>
    <property type="match status" value="1"/>
</dbReference>
<dbReference type="NCBIfam" id="NF004314">
    <property type="entry name" value="PRK05710.1-3"/>
    <property type="match status" value="1"/>
</dbReference>
<dbReference type="NCBIfam" id="NF004315">
    <property type="entry name" value="PRK05710.1-4"/>
    <property type="match status" value="1"/>
</dbReference>
<dbReference type="NCBIfam" id="TIGR03838">
    <property type="entry name" value="queuosine_YadB"/>
    <property type="match status" value="1"/>
</dbReference>
<dbReference type="PANTHER" id="PTHR43311">
    <property type="entry name" value="GLUTAMATE--TRNA LIGASE"/>
    <property type="match status" value="1"/>
</dbReference>
<dbReference type="PANTHER" id="PTHR43311:SF1">
    <property type="entry name" value="GLUTAMYL-Q TRNA(ASP) SYNTHETASE"/>
    <property type="match status" value="1"/>
</dbReference>
<dbReference type="Pfam" id="PF00749">
    <property type="entry name" value="tRNA-synt_1c"/>
    <property type="match status" value="1"/>
</dbReference>
<dbReference type="PRINTS" id="PR00987">
    <property type="entry name" value="TRNASYNTHGLU"/>
</dbReference>
<dbReference type="SUPFAM" id="SSF52374">
    <property type="entry name" value="Nucleotidylyl transferase"/>
    <property type="match status" value="1"/>
</dbReference>